<feature type="chain" id="PRO_0000182234" description="Arginine deiminase">
    <location>
        <begin position="1"/>
        <end position="411"/>
    </location>
</feature>
<feature type="active site" description="Amidino-cysteine intermediate" evidence="1">
    <location>
        <position position="401"/>
    </location>
</feature>
<protein>
    <recommendedName>
        <fullName evidence="1">Arginine deiminase</fullName>
        <shortName evidence="1">ADI</shortName>
        <ecNumber evidence="1">3.5.3.6</ecNumber>
    </recommendedName>
    <alternativeName>
        <fullName evidence="1">Arginine dihydrolase</fullName>
        <shortName evidence="1">AD</shortName>
    </alternativeName>
</protein>
<proteinExistence type="inferred from homology"/>
<evidence type="ECO:0000255" key="1">
    <source>
        <dbReference type="HAMAP-Rule" id="MF_00242"/>
    </source>
</evidence>
<comment type="catalytic activity">
    <reaction evidence="1">
        <text>L-arginine + H2O = L-citrulline + NH4(+)</text>
        <dbReference type="Rhea" id="RHEA:19597"/>
        <dbReference type="ChEBI" id="CHEBI:15377"/>
        <dbReference type="ChEBI" id="CHEBI:28938"/>
        <dbReference type="ChEBI" id="CHEBI:32682"/>
        <dbReference type="ChEBI" id="CHEBI:57743"/>
        <dbReference type="EC" id="3.5.3.6"/>
    </reaction>
</comment>
<comment type="pathway">
    <text evidence="1">Amino-acid degradation; L-arginine degradation via ADI pathway; carbamoyl phosphate from L-arginine: step 1/2.</text>
</comment>
<comment type="subcellular location">
    <subcellularLocation>
        <location evidence="1">Cytoplasm</location>
    </subcellularLocation>
</comment>
<comment type="similarity">
    <text evidence="1">Belongs to the arginine deiminase family.</text>
</comment>
<sequence>MTDGPIKVNSEIGALKTVLLKRPGKELENLVPDYLDGLLFDDIPYLEVAQKEHDHFAQVLREEGVEVLYLEKLAAESIENPQVRSEFIDDVLAESKKTILGHEEEIKALFATLSNQELVDKIMSGVRKEEINPKCTHLVEYMDDKYPFYLDPMPNLYFTRDPQASIGHGITINRMFWRARRRESIFIQYIVKHHPRFKDANIPIWLDRDCPFNIEGGDELVLSKDVLAIGVSERTSAQAIEKLARRIFENPQATFKKVVAIEIPTSRTFMHLDTVFTMIDYDKFTMHSAILKAEGNMNIFIIEYDDVNKDIAIKQSSHLKDTLEDVLGIDDIQFIPTGNGDVIDGAREQWNDGSNTLCIRPGVVVTYDRNYVSNDLLRQKGIKVIEISGSELVRGRGGPRCMSQPLFREDI</sequence>
<organism>
    <name type="scientific">Staphylococcus aureus (strain COL)</name>
    <dbReference type="NCBI Taxonomy" id="93062"/>
    <lineage>
        <taxon>Bacteria</taxon>
        <taxon>Bacillati</taxon>
        <taxon>Bacillota</taxon>
        <taxon>Bacilli</taxon>
        <taxon>Bacillales</taxon>
        <taxon>Staphylococcaceae</taxon>
        <taxon>Staphylococcus</taxon>
    </lineage>
</organism>
<dbReference type="EC" id="3.5.3.6" evidence="1"/>
<dbReference type="EMBL" id="CP000046">
    <property type="protein sequence ID" value="AAW38655.1"/>
    <property type="molecule type" value="Genomic_DNA"/>
</dbReference>
<dbReference type="RefSeq" id="WP_000129411.1">
    <property type="nucleotide sequence ID" value="NZ_JBGOFO010000001.1"/>
</dbReference>
<dbReference type="SMR" id="Q5HCR2"/>
<dbReference type="KEGG" id="sac:SACOL2657"/>
<dbReference type="HOGENOM" id="CLU_052662_0_1_9"/>
<dbReference type="UniPathway" id="UPA00254">
    <property type="reaction ID" value="UER00364"/>
</dbReference>
<dbReference type="Proteomes" id="UP000000530">
    <property type="component" value="Chromosome"/>
</dbReference>
<dbReference type="GO" id="GO:0005737">
    <property type="term" value="C:cytoplasm"/>
    <property type="evidence" value="ECO:0007669"/>
    <property type="project" value="UniProtKB-SubCell"/>
</dbReference>
<dbReference type="GO" id="GO:0016990">
    <property type="term" value="F:arginine deiminase activity"/>
    <property type="evidence" value="ECO:0007669"/>
    <property type="project" value="UniProtKB-UniRule"/>
</dbReference>
<dbReference type="GO" id="GO:0019547">
    <property type="term" value="P:arginine catabolic process to ornithine"/>
    <property type="evidence" value="ECO:0007669"/>
    <property type="project" value="UniProtKB-UniRule"/>
</dbReference>
<dbReference type="GO" id="GO:0019546">
    <property type="term" value="P:arginine deiminase pathway"/>
    <property type="evidence" value="ECO:0007669"/>
    <property type="project" value="TreeGrafter"/>
</dbReference>
<dbReference type="FunFam" id="1.10.3930.10:FF:000001">
    <property type="entry name" value="Arginine deiminase"/>
    <property type="match status" value="1"/>
</dbReference>
<dbReference type="Gene3D" id="1.10.3930.10">
    <property type="entry name" value="Arginine deiminase"/>
    <property type="match status" value="1"/>
</dbReference>
<dbReference type="Gene3D" id="3.75.10.10">
    <property type="entry name" value="L-arginine/glycine Amidinotransferase, Chain A"/>
    <property type="match status" value="1"/>
</dbReference>
<dbReference type="HAMAP" id="MF_00242">
    <property type="entry name" value="Arg_deiminase"/>
    <property type="match status" value="1"/>
</dbReference>
<dbReference type="InterPro" id="IPR003876">
    <property type="entry name" value="Arg_deiminase"/>
</dbReference>
<dbReference type="NCBIfam" id="TIGR01078">
    <property type="entry name" value="arcA"/>
    <property type="match status" value="1"/>
</dbReference>
<dbReference type="NCBIfam" id="NF002381">
    <property type="entry name" value="PRK01388.1"/>
    <property type="match status" value="1"/>
</dbReference>
<dbReference type="PANTHER" id="PTHR47271">
    <property type="entry name" value="ARGININE DEIMINASE"/>
    <property type="match status" value="1"/>
</dbReference>
<dbReference type="PANTHER" id="PTHR47271:SF2">
    <property type="entry name" value="ARGININE DEIMINASE"/>
    <property type="match status" value="1"/>
</dbReference>
<dbReference type="Pfam" id="PF02274">
    <property type="entry name" value="ADI"/>
    <property type="match status" value="1"/>
</dbReference>
<dbReference type="PIRSF" id="PIRSF006356">
    <property type="entry name" value="Arg_deiminase"/>
    <property type="match status" value="1"/>
</dbReference>
<dbReference type="PRINTS" id="PR01466">
    <property type="entry name" value="ARGDEIMINASE"/>
</dbReference>
<dbReference type="SUPFAM" id="SSF55909">
    <property type="entry name" value="Pentein"/>
    <property type="match status" value="1"/>
</dbReference>
<accession>Q5HCR2</accession>
<gene>
    <name evidence="1" type="primary">arcA</name>
    <name type="ordered locus">SACOL2657</name>
</gene>
<keyword id="KW-0056">Arginine metabolism</keyword>
<keyword id="KW-0963">Cytoplasm</keyword>
<keyword id="KW-0378">Hydrolase</keyword>
<reference key="1">
    <citation type="journal article" date="2005" name="J. Bacteriol.">
        <title>Insights on evolution of virulence and resistance from the complete genome analysis of an early methicillin-resistant Staphylococcus aureus strain and a biofilm-producing methicillin-resistant Staphylococcus epidermidis strain.</title>
        <authorList>
            <person name="Gill S.R."/>
            <person name="Fouts D.E."/>
            <person name="Archer G.L."/>
            <person name="Mongodin E.F."/>
            <person name="DeBoy R.T."/>
            <person name="Ravel J."/>
            <person name="Paulsen I.T."/>
            <person name="Kolonay J.F."/>
            <person name="Brinkac L.M."/>
            <person name="Beanan M.J."/>
            <person name="Dodson R.J."/>
            <person name="Daugherty S.C."/>
            <person name="Madupu R."/>
            <person name="Angiuoli S.V."/>
            <person name="Durkin A.S."/>
            <person name="Haft D.H."/>
            <person name="Vamathevan J.J."/>
            <person name="Khouri H."/>
            <person name="Utterback T.R."/>
            <person name="Lee C."/>
            <person name="Dimitrov G."/>
            <person name="Jiang L."/>
            <person name="Qin H."/>
            <person name="Weidman J."/>
            <person name="Tran K."/>
            <person name="Kang K.H."/>
            <person name="Hance I.R."/>
            <person name="Nelson K.E."/>
            <person name="Fraser C.M."/>
        </authorList>
    </citation>
    <scope>NUCLEOTIDE SEQUENCE [LARGE SCALE GENOMIC DNA]</scope>
    <source>
        <strain>COL</strain>
    </source>
</reference>
<name>ARCA_STAAC</name>